<organism>
    <name type="scientific">Pseudomonas aeruginosa (strain UCBPP-PA14)</name>
    <dbReference type="NCBI Taxonomy" id="208963"/>
    <lineage>
        <taxon>Bacteria</taxon>
        <taxon>Pseudomonadati</taxon>
        <taxon>Pseudomonadota</taxon>
        <taxon>Gammaproteobacteria</taxon>
        <taxon>Pseudomonadales</taxon>
        <taxon>Pseudomonadaceae</taxon>
        <taxon>Pseudomonas</taxon>
    </lineage>
</organism>
<proteinExistence type="inferred from homology"/>
<sequence length="323" mass="35755">MSSLPPAIFLMGPTAAGKTDLAMALADALPCELISVDSALIYRGMDIGTAKPSRELLARYPHRLIDIRDPAESYSAAEFRADALAAMAEATARGRIPLLVGGTMLYYKALLEGLADMPGADPEVRAAIEAEALAEGWEALHRQLAEVDPESAARIHPNDPQRLMRALEVYRLGGVSMSDLRRRQSAEKADFDASGRNQLPYTVAQLAIAPEQRQVLHARIAQRFRQMLEQGFIAEVEALHARSDLHAGLPSIRAVGYRQVWDYLDGKLSYAEMTERGIIATRQLAKRQFTWLRSWSHLHWMDSLAGDNLPRALKYLKTVSILA</sequence>
<name>MIAA_PSEAB</name>
<feature type="chain" id="PRO_1000020641" description="tRNA dimethylallyltransferase">
    <location>
        <begin position="1"/>
        <end position="323"/>
    </location>
</feature>
<feature type="region of interest" description="Interaction with substrate tRNA" evidence="1">
    <location>
        <begin position="37"/>
        <end position="40"/>
    </location>
</feature>
<feature type="region of interest" description="Interaction with substrate tRNA" evidence="1">
    <location>
        <begin position="161"/>
        <end position="165"/>
    </location>
</feature>
<feature type="binding site" evidence="1">
    <location>
        <begin position="12"/>
        <end position="19"/>
    </location>
    <ligand>
        <name>ATP</name>
        <dbReference type="ChEBI" id="CHEBI:30616"/>
    </ligand>
</feature>
<feature type="binding site" evidence="1">
    <location>
        <begin position="14"/>
        <end position="19"/>
    </location>
    <ligand>
        <name>substrate</name>
    </ligand>
</feature>
<feature type="site" description="Interaction with substrate tRNA" evidence="1">
    <location>
        <position position="103"/>
    </location>
</feature>
<feature type="site" description="Interaction with substrate tRNA" evidence="1">
    <location>
        <position position="125"/>
    </location>
</feature>
<keyword id="KW-0067">ATP-binding</keyword>
<keyword id="KW-0460">Magnesium</keyword>
<keyword id="KW-0547">Nucleotide-binding</keyword>
<keyword id="KW-0808">Transferase</keyword>
<keyword id="KW-0819">tRNA processing</keyword>
<protein>
    <recommendedName>
        <fullName evidence="1">tRNA dimethylallyltransferase</fullName>
        <ecNumber evidence="1">2.5.1.75</ecNumber>
    </recommendedName>
    <alternativeName>
        <fullName evidence="1">Dimethylallyl diphosphate:tRNA dimethylallyltransferase</fullName>
        <shortName evidence="1">DMAPP:tRNA dimethylallyltransferase</shortName>
        <shortName evidence="1">DMATase</shortName>
    </alternativeName>
    <alternativeName>
        <fullName evidence="1">Isopentenyl-diphosphate:tRNA isopentenyltransferase</fullName>
        <shortName evidence="1">IPP transferase</shortName>
        <shortName evidence="1">IPPT</shortName>
        <shortName evidence="1">IPTase</shortName>
    </alternativeName>
</protein>
<dbReference type="EC" id="2.5.1.75" evidence="1"/>
<dbReference type="EMBL" id="CP000438">
    <property type="protein sequence ID" value="ABJ14330.1"/>
    <property type="molecule type" value="Genomic_DNA"/>
</dbReference>
<dbReference type="RefSeq" id="WP_003135563.1">
    <property type="nucleotide sequence ID" value="NZ_CP034244.1"/>
</dbReference>
<dbReference type="SMR" id="Q02F73"/>
<dbReference type="KEGG" id="pau:PA14_65320"/>
<dbReference type="PseudoCAP" id="PA14_65320"/>
<dbReference type="HOGENOM" id="CLU_032616_0_0_6"/>
<dbReference type="BioCyc" id="PAER208963:G1G74-5520-MONOMER"/>
<dbReference type="Proteomes" id="UP000000653">
    <property type="component" value="Chromosome"/>
</dbReference>
<dbReference type="GO" id="GO:0005524">
    <property type="term" value="F:ATP binding"/>
    <property type="evidence" value="ECO:0007669"/>
    <property type="project" value="UniProtKB-UniRule"/>
</dbReference>
<dbReference type="GO" id="GO:0052381">
    <property type="term" value="F:tRNA dimethylallyltransferase activity"/>
    <property type="evidence" value="ECO:0007669"/>
    <property type="project" value="UniProtKB-UniRule"/>
</dbReference>
<dbReference type="GO" id="GO:0006400">
    <property type="term" value="P:tRNA modification"/>
    <property type="evidence" value="ECO:0007669"/>
    <property type="project" value="TreeGrafter"/>
</dbReference>
<dbReference type="FunFam" id="1.10.20.140:FF:000001">
    <property type="entry name" value="tRNA dimethylallyltransferase"/>
    <property type="match status" value="1"/>
</dbReference>
<dbReference type="Gene3D" id="1.10.20.140">
    <property type="match status" value="1"/>
</dbReference>
<dbReference type="Gene3D" id="3.40.50.300">
    <property type="entry name" value="P-loop containing nucleotide triphosphate hydrolases"/>
    <property type="match status" value="1"/>
</dbReference>
<dbReference type="HAMAP" id="MF_00185">
    <property type="entry name" value="IPP_trans"/>
    <property type="match status" value="1"/>
</dbReference>
<dbReference type="InterPro" id="IPR039657">
    <property type="entry name" value="Dimethylallyltransferase"/>
</dbReference>
<dbReference type="InterPro" id="IPR018022">
    <property type="entry name" value="IPT"/>
</dbReference>
<dbReference type="InterPro" id="IPR027417">
    <property type="entry name" value="P-loop_NTPase"/>
</dbReference>
<dbReference type="NCBIfam" id="TIGR00174">
    <property type="entry name" value="miaA"/>
    <property type="match status" value="1"/>
</dbReference>
<dbReference type="PANTHER" id="PTHR11088">
    <property type="entry name" value="TRNA DIMETHYLALLYLTRANSFERASE"/>
    <property type="match status" value="1"/>
</dbReference>
<dbReference type="PANTHER" id="PTHR11088:SF60">
    <property type="entry name" value="TRNA DIMETHYLALLYLTRANSFERASE"/>
    <property type="match status" value="1"/>
</dbReference>
<dbReference type="Pfam" id="PF01715">
    <property type="entry name" value="IPPT"/>
    <property type="match status" value="1"/>
</dbReference>
<dbReference type="SUPFAM" id="SSF52540">
    <property type="entry name" value="P-loop containing nucleoside triphosphate hydrolases"/>
    <property type="match status" value="1"/>
</dbReference>
<accession>Q02F73</accession>
<evidence type="ECO:0000255" key="1">
    <source>
        <dbReference type="HAMAP-Rule" id="MF_00185"/>
    </source>
</evidence>
<gene>
    <name evidence="1" type="primary">miaA</name>
    <name type="ordered locus">PA14_65320</name>
</gene>
<reference key="1">
    <citation type="journal article" date="2006" name="Genome Biol.">
        <title>Genomic analysis reveals that Pseudomonas aeruginosa virulence is combinatorial.</title>
        <authorList>
            <person name="Lee D.G."/>
            <person name="Urbach J.M."/>
            <person name="Wu G."/>
            <person name="Liberati N.T."/>
            <person name="Feinbaum R.L."/>
            <person name="Miyata S."/>
            <person name="Diggins L.T."/>
            <person name="He J."/>
            <person name="Saucier M."/>
            <person name="Deziel E."/>
            <person name="Friedman L."/>
            <person name="Li L."/>
            <person name="Grills G."/>
            <person name="Montgomery K."/>
            <person name="Kucherlapati R."/>
            <person name="Rahme L.G."/>
            <person name="Ausubel F.M."/>
        </authorList>
    </citation>
    <scope>NUCLEOTIDE SEQUENCE [LARGE SCALE GENOMIC DNA]</scope>
    <source>
        <strain>UCBPP-PA14</strain>
    </source>
</reference>
<comment type="function">
    <text evidence="1">Catalyzes the transfer of a dimethylallyl group onto the adenine at position 37 in tRNAs that read codons beginning with uridine, leading to the formation of N6-(dimethylallyl)adenosine (i(6)A).</text>
</comment>
<comment type="catalytic activity">
    <reaction evidence="1">
        <text>adenosine(37) in tRNA + dimethylallyl diphosphate = N(6)-dimethylallyladenosine(37) in tRNA + diphosphate</text>
        <dbReference type="Rhea" id="RHEA:26482"/>
        <dbReference type="Rhea" id="RHEA-COMP:10162"/>
        <dbReference type="Rhea" id="RHEA-COMP:10375"/>
        <dbReference type="ChEBI" id="CHEBI:33019"/>
        <dbReference type="ChEBI" id="CHEBI:57623"/>
        <dbReference type="ChEBI" id="CHEBI:74411"/>
        <dbReference type="ChEBI" id="CHEBI:74415"/>
        <dbReference type="EC" id="2.5.1.75"/>
    </reaction>
</comment>
<comment type="cofactor">
    <cofactor evidence="1">
        <name>Mg(2+)</name>
        <dbReference type="ChEBI" id="CHEBI:18420"/>
    </cofactor>
</comment>
<comment type="subunit">
    <text evidence="1">Monomer.</text>
</comment>
<comment type="similarity">
    <text evidence="1">Belongs to the IPP transferase family.</text>
</comment>